<dbReference type="EMBL" id="AB006424">
    <property type="protein sequence ID" value="BAA33140.1"/>
    <property type="status" value="ALT_FRAME"/>
    <property type="molecule type" value="Genomic_DNA"/>
</dbReference>
<dbReference type="EMBL" id="AL009126">
    <property type="protein sequence ID" value="CAB12036.2"/>
    <property type="molecule type" value="Genomic_DNA"/>
</dbReference>
<dbReference type="PIR" id="C69751">
    <property type="entry name" value="C69751"/>
</dbReference>
<dbReference type="RefSeq" id="NP_388124.2">
    <property type="nucleotide sequence ID" value="NC_000964.3"/>
</dbReference>
<dbReference type="RefSeq" id="WP_003246395.1">
    <property type="nucleotide sequence ID" value="NZ_OZ025638.1"/>
</dbReference>
<dbReference type="SMR" id="O31464"/>
<dbReference type="FunCoup" id="O31464">
    <property type="interactions" value="254"/>
</dbReference>
<dbReference type="STRING" id="224308.BSU02420"/>
<dbReference type="PaxDb" id="224308-BSU02420"/>
<dbReference type="EnsemblBacteria" id="CAB12036">
    <property type="protein sequence ID" value="CAB12036"/>
    <property type="gene ID" value="BSU_02420"/>
</dbReference>
<dbReference type="GeneID" id="938419"/>
<dbReference type="KEGG" id="bsu:BSU02420"/>
<dbReference type="PATRIC" id="fig|224308.179.peg.249"/>
<dbReference type="eggNOG" id="COG1115">
    <property type="taxonomic scope" value="Bacteria"/>
</dbReference>
<dbReference type="InParanoid" id="O31464"/>
<dbReference type="OrthoDB" id="9804874at2"/>
<dbReference type="PhylomeDB" id="O31464"/>
<dbReference type="BioCyc" id="BSUB:BSU02420-MONOMER"/>
<dbReference type="Proteomes" id="UP000001570">
    <property type="component" value="Chromosome"/>
</dbReference>
<dbReference type="GO" id="GO:0005886">
    <property type="term" value="C:plasma membrane"/>
    <property type="evidence" value="ECO:0000318"/>
    <property type="project" value="GO_Central"/>
</dbReference>
<dbReference type="GO" id="GO:0005283">
    <property type="term" value="F:amino acid:sodium symporter activity"/>
    <property type="evidence" value="ECO:0007669"/>
    <property type="project" value="InterPro"/>
</dbReference>
<dbReference type="FunFam" id="1.20.1740.10:FF:000004">
    <property type="entry name" value="Sodium:alanine symporter family protein"/>
    <property type="match status" value="1"/>
</dbReference>
<dbReference type="Gene3D" id="1.20.1740.10">
    <property type="entry name" value="Amino acid/polyamine transporter I"/>
    <property type="match status" value="1"/>
</dbReference>
<dbReference type="InterPro" id="IPR001463">
    <property type="entry name" value="Na/Ala_symport"/>
</dbReference>
<dbReference type="NCBIfam" id="TIGR00835">
    <property type="entry name" value="agcS"/>
    <property type="match status" value="1"/>
</dbReference>
<dbReference type="PANTHER" id="PTHR30330">
    <property type="entry name" value="AGSS FAMILY TRANSPORTER, SODIUM-ALANINE"/>
    <property type="match status" value="1"/>
</dbReference>
<dbReference type="PANTHER" id="PTHR30330:SF5">
    <property type="entry name" value="SODIUM_GLUTAMINE SYMPORTER GLNT-RELATED"/>
    <property type="match status" value="1"/>
</dbReference>
<dbReference type="Pfam" id="PF01235">
    <property type="entry name" value="Na_Ala_symp"/>
    <property type="match status" value="1"/>
</dbReference>
<dbReference type="PRINTS" id="PR00175">
    <property type="entry name" value="NAALASMPORT"/>
</dbReference>
<dbReference type="PROSITE" id="PS00873">
    <property type="entry name" value="NA_ALANINE_SYMP"/>
    <property type="match status" value="1"/>
</dbReference>
<reference key="1">
    <citation type="submission" date="1997-07" db="EMBL/GenBank/DDBJ databases">
        <title>Sequence analysis of the 70kb region between 17 and 23 degree of the Bacillus subtilis chromosome.</title>
        <authorList>
            <person name="Haga K."/>
            <person name="Liu H."/>
            <person name="Yasumoto K."/>
            <person name="Takahashi H."/>
            <person name="Yoshikawa H."/>
        </authorList>
    </citation>
    <scope>NUCLEOTIDE SEQUENCE [GENOMIC DNA]</scope>
    <source>
        <strain>168</strain>
    </source>
</reference>
<reference key="2">
    <citation type="journal article" date="1997" name="Nature">
        <title>The complete genome sequence of the Gram-positive bacterium Bacillus subtilis.</title>
        <authorList>
            <person name="Kunst F."/>
            <person name="Ogasawara N."/>
            <person name="Moszer I."/>
            <person name="Albertini A.M."/>
            <person name="Alloni G."/>
            <person name="Azevedo V."/>
            <person name="Bertero M.G."/>
            <person name="Bessieres P."/>
            <person name="Bolotin A."/>
            <person name="Borchert S."/>
            <person name="Borriss R."/>
            <person name="Boursier L."/>
            <person name="Brans A."/>
            <person name="Braun M."/>
            <person name="Brignell S.C."/>
            <person name="Bron S."/>
            <person name="Brouillet S."/>
            <person name="Bruschi C.V."/>
            <person name="Caldwell B."/>
            <person name="Capuano V."/>
            <person name="Carter N.M."/>
            <person name="Choi S.-K."/>
            <person name="Codani J.-J."/>
            <person name="Connerton I.F."/>
            <person name="Cummings N.J."/>
            <person name="Daniel R.A."/>
            <person name="Denizot F."/>
            <person name="Devine K.M."/>
            <person name="Duesterhoeft A."/>
            <person name="Ehrlich S.D."/>
            <person name="Emmerson P.T."/>
            <person name="Entian K.-D."/>
            <person name="Errington J."/>
            <person name="Fabret C."/>
            <person name="Ferrari E."/>
            <person name="Foulger D."/>
            <person name="Fritz C."/>
            <person name="Fujita M."/>
            <person name="Fujita Y."/>
            <person name="Fuma S."/>
            <person name="Galizzi A."/>
            <person name="Galleron N."/>
            <person name="Ghim S.-Y."/>
            <person name="Glaser P."/>
            <person name="Goffeau A."/>
            <person name="Golightly E.J."/>
            <person name="Grandi G."/>
            <person name="Guiseppi G."/>
            <person name="Guy B.J."/>
            <person name="Haga K."/>
            <person name="Haiech J."/>
            <person name="Harwood C.R."/>
            <person name="Henaut A."/>
            <person name="Hilbert H."/>
            <person name="Holsappel S."/>
            <person name="Hosono S."/>
            <person name="Hullo M.-F."/>
            <person name="Itaya M."/>
            <person name="Jones L.-M."/>
            <person name="Joris B."/>
            <person name="Karamata D."/>
            <person name="Kasahara Y."/>
            <person name="Klaerr-Blanchard M."/>
            <person name="Klein C."/>
            <person name="Kobayashi Y."/>
            <person name="Koetter P."/>
            <person name="Koningstein G."/>
            <person name="Krogh S."/>
            <person name="Kumano M."/>
            <person name="Kurita K."/>
            <person name="Lapidus A."/>
            <person name="Lardinois S."/>
            <person name="Lauber J."/>
            <person name="Lazarevic V."/>
            <person name="Lee S.-M."/>
            <person name="Levine A."/>
            <person name="Liu H."/>
            <person name="Masuda S."/>
            <person name="Mauel C."/>
            <person name="Medigue C."/>
            <person name="Medina N."/>
            <person name="Mellado R.P."/>
            <person name="Mizuno M."/>
            <person name="Moestl D."/>
            <person name="Nakai S."/>
            <person name="Noback M."/>
            <person name="Noone D."/>
            <person name="O'Reilly M."/>
            <person name="Ogawa K."/>
            <person name="Ogiwara A."/>
            <person name="Oudega B."/>
            <person name="Park S.-H."/>
            <person name="Parro V."/>
            <person name="Pohl T.M."/>
            <person name="Portetelle D."/>
            <person name="Porwollik S."/>
            <person name="Prescott A.M."/>
            <person name="Presecan E."/>
            <person name="Pujic P."/>
            <person name="Purnelle B."/>
            <person name="Rapoport G."/>
            <person name="Rey M."/>
            <person name="Reynolds S."/>
            <person name="Rieger M."/>
            <person name="Rivolta C."/>
            <person name="Rocha E."/>
            <person name="Roche B."/>
            <person name="Rose M."/>
            <person name="Sadaie Y."/>
            <person name="Sato T."/>
            <person name="Scanlan E."/>
            <person name="Schleich S."/>
            <person name="Schroeter R."/>
            <person name="Scoffone F."/>
            <person name="Sekiguchi J."/>
            <person name="Sekowska A."/>
            <person name="Seror S.J."/>
            <person name="Serror P."/>
            <person name="Shin B.-S."/>
            <person name="Soldo B."/>
            <person name="Sorokin A."/>
            <person name="Tacconi E."/>
            <person name="Takagi T."/>
            <person name="Takahashi H."/>
            <person name="Takemaru K."/>
            <person name="Takeuchi M."/>
            <person name="Tamakoshi A."/>
            <person name="Tanaka T."/>
            <person name="Terpstra P."/>
            <person name="Tognoni A."/>
            <person name="Tosato V."/>
            <person name="Uchiyama S."/>
            <person name="Vandenbol M."/>
            <person name="Vannier F."/>
            <person name="Vassarotti A."/>
            <person name="Viari A."/>
            <person name="Wambutt R."/>
            <person name="Wedler E."/>
            <person name="Wedler H."/>
            <person name="Weitzenegger T."/>
            <person name="Winters P."/>
            <person name="Wipat A."/>
            <person name="Yamamoto H."/>
            <person name="Yamane K."/>
            <person name="Yasumoto K."/>
            <person name="Yata K."/>
            <person name="Yoshida K."/>
            <person name="Yoshikawa H.-F."/>
            <person name="Zumstein E."/>
            <person name="Yoshikawa H."/>
            <person name="Danchin A."/>
        </authorList>
    </citation>
    <scope>NUCLEOTIDE SEQUENCE [LARGE SCALE GENOMIC DNA]</scope>
    <source>
        <strain>168</strain>
    </source>
</reference>
<reference key="3">
    <citation type="journal article" date="2009" name="Microbiology">
        <title>From a consortium sequence to a unified sequence: the Bacillus subtilis 168 reference genome a decade later.</title>
        <authorList>
            <person name="Barbe V."/>
            <person name="Cruveiller S."/>
            <person name="Kunst F."/>
            <person name="Lenoble P."/>
            <person name="Meurice G."/>
            <person name="Sekowska A."/>
            <person name="Vallenet D."/>
            <person name="Wang T."/>
            <person name="Moszer I."/>
            <person name="Medigue C."/>
            <person name="Danchin A."/>
        </authorList>
    </citation>
    <scope>SEQUENCE REVISION TO N-TERMINUS</scope>
</reference>
<reference key="4">
    <citation type="journal article" date="2005" name="J. Bacteriol.">
        <title>Enhancement of glutamine utilization in Bacillus subtilis through the GlnK-GlnL two-component regulatory system.</title>
        <authorList>
            <person name="Satomura T."/>
            <person name="Shimura D."/>
            <person name="Asai K."/>
            <person name="Sadaie Y."/>
            <person name="Hirooka K."/>
            <person name="Fujita Y."/>
        </authorList>
    </citation>
    <scope>FUNCTION</scope>
    <scope>GENE NAME</scope>
    <source>
        <strain>168</strain>
    </source>
</reference>
<name>GLNT_BACSU</name>
<accession>O31464</accession>
<accession>Q7DL42</accession>
<keyword id="KW-0029">Amino-acid transport</keyword>
<keyword id="KW-1003">Cell membrane</keyword>
<keyword id="KW-0406">Ion transport</keyword>
<keyword id="KW-0472">Membrane</keyword>
<keyword id="KW-1185">Reference proteome</keyword>
<keyword id="KW-0915">Sodium</keyword>
<keyword id="KW-0739">Sodium transport</keyword>
<keyword id="KW-0769">Symport</keyword>
<keyword id="KW-0812">Transmembrane</keyword>
<keyword id="KW-1133">Transmembrane helix</keyword>
<keyword id="KW-0813">Transport</keyword>
<gene>
    <name type="primary">glnT</name>
    <name type="synonym">ybgH</name>
    <name type="ordered locus">BSU02420</name>
</gene>
<feature type="chain" id="PRO_0000161565" description="Probable sodium/glutamine symporter GlnT">
    <location>
        <begin position="1"/>
        <end position="478"/>
    </location>
</feature>
<feature type="transmembrane region" description="Helical" evidence="1">
    <location>
        <begin position="14"/>
        <end position="34"/>
    </location>
</feature>
<feature type="transmembrane region" description="Helical" evidence="1">
    <location>
        <begin position="85"/>
        <end position="105"/>
    </location>
</feature>
<feature type="transmembrane region" description="Helical" evidence="1">
    <location>
        <begin position="145"/>
        <end position="165"/>
    </location>
</feature>
<feature type="transmembrane region" description="Helical" evidence="1">
    <location>
        <begin position="185"/>
        <end position="205"/>
    </location>
</feature>
<feature type="transmembrane region" description="Helical" evidence="1">
    <location>
        <begin position="211"/>
        <end position="231"/>
    </location>
</feature>
<feature type="transmembrane region" description="Helical" evidence="1">
    <location>
        <begin position="236"/>
        <end position="256"/>
    </location>
</feature>
<feature type="transmembrane region" description="Helical" evidence="1">
    <location>
        <begin position="298"/>
        <end position="318"/>
    </location>
</feature>
<feature type="transmembrane region" description="Helical" evidence="1">
    <location>
        <begin position="342"/>
        <end position="362"/>
    </location>
</feature>
<feature type="transmembrane region" description="Helical" evidence="1">
    <location>
        <begin position="381"/>
        <end position="401"/>
    </location>
</feature>
<feature type="transmembrane region" description="Helical" evidence="1">
    <location>
        <begin position="411"/>
        <end position="431"/>
    </location>
</feature>
<protein>
    <recommendedName>
        <fullName>Probable sodium/glutamine symporter GlnT</fullName>
    </recommendedName>
</protein>
<organism>
    <name type="scientific">Bacillus subtilis (strain 168)</name>
    <dbReference type="NCBI Taxonomy" id="224308"/>
    <lineage>
        <taxon>Bacteria</taxon>
        <taxon>Bacillati</taxon>
        <taxon>Bacillota</taxon>
        <taxon>Bacilli</taxon>
        <taxon>Bacillales</taxon>
        <taxon>Bacillaceae</taxon>
        <taxon>Bacillus</taxon>
    </lineage>
</organism>
<evidence type="ECO:0000255" key="1"/>
<evidence type="ECO:0000269" key="2">
    <source>
    </source>
</evidence>
<evidence type="ECO:0000305" key="3"/>
<sequence length="478" mass="51584">MQQILEHIVGIANDLLWSKLLIVLLLSFGIYFTFRLKFLQVRMLKEMVRVLREGAASRSKNSISPFQAFCISMAARVGTGNITGIAIAIALGGPGAIFWMWIIAIIGSASSFVESTLAQIYKVKDVNGFRGGPAYYMEKGLNKRWMGALFAVLITLSFGIVFNSVQSNTVSLAFENAFGTNRLTLGLILIAVFGTIIFGGVKRIAKLAESIVVVLAVLYIGVAFFVIFSNITQLPGVLALIVKNAFGFDQAAGGALGAALMQGVRRGIFSNEAGMGSAPNAAATATTSHPVKQGLIQAFGVLTDTLVICTSTAFIILFSDAYHTPGLSGIALTQASLSSHVGSWASGFLAILILLFGFCALIGNYYYGETNIGFLNKSKKLIFVYRIGVLAMIVFGCVAKVQLVWDLADLFMGLMVIVNLIAIFLLSKVVFTALKDYTRQKKAGKDPVFYKDVLKNHNGIECWPVSDTKTDTHNKQIS</sequence>
<comment type="function">
    <text evidence="2">Probably functions as a sodium/glutamine symporter for glutamine uptake.</text>
</comment>
<comment type="subcellular location">
    <subcellularLocation>
        <location evidence="3">Cell membrane</location>
        <topology evidence="3">Multi-pass membrane protein</topology>
    </subcellularLocation>
</comment>
<comment type="similarity">
    <text evidence="3">Belongs to the alanine or glycine:cation symporter (AGCS) (TC 2.A.25) family.</text>
</comment>
<comment type="sequence caution" evidence="3">
    <conflict type="frameshift">
        <sequence resource="EMBL-CDS" id="BAA33140"/>
    </conflict>
</comment>
<proteinExistence type="inferred from homology"/>